<organism>
    <name type="scientific">Rattus norvegicus</name>
    <name type="common">Rat</name>
    <dbReference type="NCBI Taxonomy" id="10116"/>
    <lineage>
        <taxon>Eukaryota</taxon>
        <taxon>Metazoa</taxon>
        <taxon>Chordata</taxon>
        <taxon>Craniata</taxon>
        <taxon>Vertebrata</taxon>
        <taxon>Euteleostomi</taxon>
        <taxon>Mammalia</taxon>
        <taxon>Eutheria</taxon>
        <taxon>Euarchontoglires</taxon>
        <taxon>Glires</taxon>
        <taxon>Rodentia</taxon>
        <taxon>Myomorpha</taxon>
        <taxon>Muroidea</taxon>
        <taxon>Muridae</taxon>
        <taxon>Murinae</taxon>
        <taxon>Rattus</taxon>
    </lineage>
</organism>
<keyword id="KW-0007">Acetylation</keyword>
<keyword id="KW-1003">Cell membrane</keyword>
<keyword id="KW-0963">Cytoplasm</keyword>
<keyword id="KW-1015">Disulfide bond</keyword>
<keyword id="KW-0967">Endosome</keyword>
<keyword id="KW-0290">Folate-binding</keyword>
<keyword id="KW-0325">Glycoprotein</keyword>
<keyword id="KW-0472">Membrane</keyword>
<keyword id="KW-0597">Phosphoprotein</keyword>
<keyword id="KW-1185">Reference proteome</keyword>
<keyword id="KW-0769">Symport</keyword>
<keyword id="KW-0812">Transmembrane</keyword>
<keyword id="KW-1133">Transmembrane helix</keyword>
<keyword id="KW-0813">Transport</keyword>
<reference key="1">
    <citation type="journal article" date="2004" name="Genome Res.">
        <title>The status, quality, and expansion of the NIH full-length cDNA project: the Mammalian Gene Collection (MGC).</title>
        <authorList>
            <consortium name="The MGC Project Team"/>
        </authorList>
    </citation>
    <scope>NUCLEOTIDE SEQUENCE [LARGE SCALE MRNA]</scope>
    <source>
        <tissue>Liver</tissue>
    </source>
</reference>
<reference key="2">
    <citation type="journal article" date="2005" name="Cell">
        <title>Identification of an intestinal heme transporter.</title>
        <authorList>
            <person name="Shayeghi M."/>
            <person name="Latunde-Dada G.O."/>
            <person name="Oakhill J.S."/>
            <person name="Laftah A.H."/>
            <person name="Takeuchi K."/>
            <person name="Halliday N."/>
            <person name="Khan Y."/>
            <person name="Warley A."/>
            <person name="McCann F.E."/>
            <person name="Hider R.C."/>
            <person name="Frazer D.M."/>
            <person name="Anderson G.J."/>
            <person name="Vulpe C.D."/>
            <person name="Simpson R.J."/>
            <person name="McKie A.T."/>
        </authorList>
    </citation>
    <scope>TISSUE SPECIFICITY</scope>
</reference>
<reference key="3">
    <citation type="journal article" date="2008" name="Am. J. Physiol.">
        <title>Functional characterization of PCFT/HCP1 as the molecular entity of the carrier-mediated intestinal folate transport system in the rat model.</title>
        <authorList>
            <person name="Inoue K."/>
            <person name="Nakai Y."/>
            <person name="Ueda S."/>
            <person name="Kamigaso S."/>
            <person name="Ohta K.Y."/>
            <person name="Hatakeyama M."/>
            <person name="Hayashi Y."/>
            <person name="Otagiri M."/>
            <person name="Yuasa H."/>
        </authorList>
    </citation>
    <scope>FUNCTION</scope>
    <scope>TRANSPORTER ACTIVITY</scope>
    <scope>BIOPHYSICOCHEMICAL PROPERTIES</scope>
</reference>
<reference key="4">
    <citation type="journal article" date="2019" name="Sci. Rep.">
        <title>Identification of the amino acid residue responsible for the myricetin sensitivity of human proton-coupled folate transporter.</title>
        <authorList>
            <person name="Yamashiro T."/>
            <person name="Yasujima T."/>
            <person name="Ohta K."/>
            <person name="Inoue K."/>
            <person name="Yuasa H."/>
        </authorList>
    </citation>
    <scope>FUNCTION</scope>
    <scope>ACTIVITY REGULATION</scope>
    <scope>MUTAGENESIS OF ASN-158</scope>
</reference>
<name>PCFT_RAT</name>
<gene>
    <name evidence="13" type="primary">Slc46a1</name>
    <name evidence="8" type="synonym">Hcp1</name>
    <name evidence="10" type="synonym">Pcft</name>
</gene>
<dbReference type="EMBL" id="BC089868">
    <property type="protein sequence ID" value="AAH89868.1"/>
    <property type="molecule type" value="mRNA"/>
</dbReference>
<dbReference type="RefSeq" id="NP_001013991.1">
    <property type="nucleotide sequence ID" value="NM_001013969.1"/>
</dbReference>
<dbReference type="RefSeq" id="XP_006247001.1">
    <property type="nucleotide sequence ID" value="XM_006246939.3"/>
</dbReference>
<dbReference type="SMR" id="Q5EBA8"/>
<dbReference type="FunCoup" id="Q5EBA8">
    <property type="interactions" value="170"/>
</dbReference>
<dbReference type="STRING" id="10116.ENSRNOP00000013698"/>
<dbReference type="GlyCosmos" id="Q5EBA8">
    <property type="glycosylation" value="2 sites, No reported glycans"/>
</dbReference>
<dbReference type="GlyGen" id="Q5EBA8">
    <property type="glycosylation" value="2 sites"/>
</dbReference>
<dbReference type="iPTMnet" id="Q5EBA8"/>
<dbReference type="PhosphoSitePlus" id="Q5EBA8"/>
<dbReference type="PaxDb" id="10116-ENSRNOP00000013698"/>
<dbReference type="Ensembl" id="ENSRNOT00000013698.8">
    <property type="protein sequence ID" value="ENSRNOP00000013698.4"/>
    <property type="gene ID" value="ENSRNOG00000010291.8"/>
</dbReference>
<dbReference type="GeneID" id="303333"/>
<dbReference type="KEGG" id="rno:303333"/>
<dbReference type="AGR" id="RGD:1309472"/>
<dbReference type="CTD" id="113235"/>
<dbReference type="RGD" id="1309472">
    <property type="gene designation" value="Slc46a1"/>
</dbReference>
<dbReference type="eggNOG" id="KOG2816">
    <property type="taxonomic scope" value="Eukaryota"/>
</dbReference>
<dbReference type="GeneTree" id="ENSGT00950000183096"/>
<dbReference type="HOGENOM" id="CLU_028365_1_0_1"/>
<dbReference type="InParanoid" id="Q5EBA8"/>
<dbReference type="OMA" id="KRSECGN"/>
<dbReference type="OrthoDB" id="419734at2759"/>
<dbReference type="PhylomeDB" id="Q5EBA8"/>
<dbReference type="TreeFam" id="TF315701"/>
<dbReference type="Reactome" id="R-RNO-196757">
    <property type="pathway name" value="Metabolism of folate and pterines"/>
</dbReference>
<dbReference type="Reactome" id="R-RNO-917937">
    <property type="pathway name" value="Iron uptake and transport"/>
</dbReference>
<dbReference type="Reactome" id="R-RNO-9707616">
    <property type="pathway name" value="Heme signaling"/>
</dbReference>
<dbReference type="PRO" id="PR:Q5EBA8"/>
<dbReference type="Proteomes" id="UP000002494">
    <property type="component" value="Chromosome 10"/>
</dbReference>
<dbReference type="Bgee" id="ENSRNOG00000010291">
    <property type="expression patterns" value="Expressed in liver and 18 other cell types or tissues"/>
</dbReference>
<dbReference type="GO" id="GO:0016324">
    <property type="term" value="C:apical plasma membrane"/>
    <property type="evidence" value="ECO:0000250"/>
    <property type="project" value="UniProtKB"/>
</dbReference>
<dbReference type="GO" id="GO:0016323">
    <property type="term" value="C:basolateral plasma membrane"/>
    <property type="evidence" value="ECO:0000250"/>
    <property type="project" value="UniProtKB"/>
</dbReference>
<dbReference type="GO" id="GO:0031526">
    <property type="term" value="C:brush border membrane"/>
    <property type="evidence" value="ECO:0000314"/>
    <property type="project" value="RGD"/>
</dbReference>
<dbReference type="GO" id="GO:0005737">
    <property type="term" value="C:cytoplasm"/>
    <property type="evidence" value="ECO:0000250"/>
    <property type="project" value="UniProtKB"/>
</dbReference>
<dbReference type="GO" id="GO:0005768">
    <property type="term" value="C:endosome"/>
    <property type="evidence" value="ECO:0000250"/>
    <property type="project" value="UniProtKB"/>
</dbReference>
<dbReference type="GO" id="GO:0010008">
    <property type="term" value="C:endosome membrane"/>
    <property type="evidence" value="ECO:0007669"/>
    <property type="project" value="UniProtKB-SubCell"/>
</dbReference>
<dbReference type="GO" id="GO:0005886">
    <property type="term" value="C:plasma membrane"/>
    <property type="evidence" value="ECO:0000266"/>
    <property type="project" value="RGD"/>
</dbReference>
<dbReference type="GO" id="GO:0005542">
    <property type="term" value="F:folic acid binding"/>
    <property type="evidence" value="ECO:0007669"/>
    <property type="project" value="UniProtKB-KW"/>
</dbReference>
<dbReference type="GO" id="GO:0008517">
    <property type="term" value="F:folic acid transmembrane transporter activity"/>
    <property type="evidence" value="ECO:0000250"/>
    <property type="project" value="UniProtKB"/>
</dbReference>
<dbReference type="GO" id="GO:0140211">
    <property type="term" value="F:folic acid:proton symporter activity"/>
    <property type="evidence" value="ECO:0000266"/>
    <property type="project" value="RGD"/>
</dbReference>
<dbReference type="GO" id="GO:0015232">
    <property type="term" value="F:heme transmembrane transporter activity"/>
    <property type="evidence" value="ECO:0000250"/>
    <property type="project" value="UniProtKB"/>
</dbReference>
<dbReference type="GO" id="GO:0015350">
    <property type="term" value="F:methotrexate transmembrane transporter activity"/>
    <property type="evidence" value="ECO:0000250"/>
    <property type="project" value="UniProtKB"/>
</dbReference>
<dbReference type="GO" id="GO:0015078">
    <property type="term" value="F:proton transmembrane transporter activity"/>
    <property type="evidence" value="ECO:0000266"/>
    <property type="project" value="RGD"/>
</dbReference>
<dbReference type="GO" id="GO:0015293">
    <property type="term" value="F:symporter activity"/>
    <property type="evidence" value="ECO:0000250"/>
    <property type="project" value="UniProtKB"/>
</dbReference>
<dbReference type="GO" id="GO:0022857">
    <property type="term" value="F:transmembrane transporter activity"/>
    <property type="evidence" value="ECO:0000318"/>
    <property type="project" value="GO_Central"/>
</dbReference>
<dbReference type="GO" id="GO:1904447">
    <property type="term" value="P:folate import across plasma membrane"/>
    <property type="evidence" value="ECO:0000266"/>
    <property type="project" value="RGD"/>
</dbReference>
<dbReference type="GO" id="GO:0098838">
    <property type="term" value="P:folate transmembrane transport"/>
    <property type="evidence" value="ECO:0000266"/>
    <property type="project" value="RGD"/>
</dbReference>
<dbReference type="GO" id="GO:0015884">
    <property type="term" value="P:folic acid transport"/>
    <property type="evidence" value="ECO:0000250"/>
    <property type="project" value="UniProtKB"/>
</dbReference>
<dbReference type="GO" id="GO:0015886">
    <property type="term" value="P:heme transport"/>
    <property type="evidence" value="ECO:0000250"/>
    <property type="project" value="UniProtKB"/>
</dbReference>
<dbReference type="GO" id="GO:1902600">
    <property type="term" value="P:proton transmembrane transport"/>
    <property type="evidence" value="ECO:0000266"/>
    <property type="project" value="RGD"/>
</dbReference>
<dbReference type="GO" id="GO:0046654">
    <property type="term" value="P:tetrahydrofolate biosynthetic process"/>
    <property type="evidence" value="ECO:0007669"/>
    <property type="project" value="Ensembl"/>
</dbReference>
<dbReference type="GO" id="GO:0055085">
    <property type="term" value="P:transmembrane transport"/>
    <property type="evidence" value="ECO:0000318"/>
    <property type="project" value="GO_Central"/>
</dbReference>
<dbReference type="FunFam" id="1.20.1250.20:FF:000263">
    <property type="entry name" value="Proton-coupled folate transporter isoform 1"/>
    <property type="match status" value="1"/>
</dbReference>
<dbReference type="Gene3D" id="1.20.1250.20">
    <property type="entry name" value="MFS general substrate transporter like domains"/>
    <property type="match status" value="1"/>
</dbReference>
<dbReference type="InterPro" id="IPR011701">
    <property type="entry name" value="MFS"/>
</dbReference>
<dbReference type="InterPro" id="IPR020846">
    <property type="entry name" value="MFS_dom"/>
</dbReference>
<dbReference type="InterPro" id="IPR036259">
    <property type="entry name" value="MFS_trans_sf"/>
</dbReference>
<dbReference type="InterPro" id="IPR005829">
    <property type="entry name" value="Sugar_transporter_CS"/>
</dbReference>
<dbReference type="PANTHER" id="PTHR23507:SF2">
    <property type="entry name" value="PROTON-COUPLED FOLATE TRANSPORTER"/>
    <property type="match status" value="1"/>
</dbReference>
<dbReference type="PANTHER" id="PTHR23507">
    <property type="entry name" value="ZGC:174356"/>
    <property type="match status" value="1"/>
</dbReference>
<dbReference type="Pfam" id="PF07690">
    <property type="entry name" value="MFS_1"/>
    <property type="match status" value="1"/>
</dbReference>
<dbReference type="SUPFAM" id="SSF103473">
    <property type="entry name" value="MFS general substrate transporter"/>
    <property type="match status" value="1"/>
</dbReference>
<dbReference type="PROSITE" id="PS50850">
    <property type="entry name" value="MFS"/>
    <property type="match status" value="1"/>
</dbReference>
<sequence>MEGRVSPVGSSHRLLTAAVLFRGPVEPLVFLANFALVLQGPLTTQYIWHRISTELGYNGTRHRENCGNQSADPVLKEVETLTSHWTLYMNVGGFLVGLFWSTLLGAWSDRVGRRPLLVLASLGLLLQAVVSIFVVQLQLHIGFFVLGRALCALLGDFNGLLAASFASVADVSSNHSRTFRMALLEACIGVAGTLASLLGGHWLRAQGYANPFWLALAVLIVMTLYAAFCFGETVKEPKSTRLFTLRHHRSIVQLYVVPAPEKSRMHLALYSLAIFVVVTVHFGAQDILTLYELSTPLCWDSKLIGYGSAAQHLPYLTSLLGLRLLQFCLADTWVAEIGLAFNILGMVVFAFATITPLMFTGYGLLFLSLVTTPVIRAKLSKLVSESEQGALFSAVACVNSLAMLMASGIFNSLYPATLNFMKGFPFLLGAGLLFIPAILIGVLEKVNPHPEFQQFPQNS</sequence>
<accession>Q5EBA8</accession>
<comment type="function">
    <text evidence="3 6 7">Proton-coupled folate symporter that mediates folate absorption using an H(+) gradient as a driving force (PubMed:18174275, PubMed:31792273). Involved in the intestinal absorption of folates at the brush-border membrane of the proximal jejunum, and the transport from blood to cerebrospinal fluid across the choroid plexus (PubMed:18174275). Functions at acidic pH via alternate outward- and inward-open conformation states (By similarity). Protonation of residues in the outward open state primes the protein for transport (By similarity). Binding of folate promotes breaking of salt bridge network and subsequent closure of the extracellular gate, leading to the inward-open state and release of protons and folate (By similarity). Also able to transport antifolate drugs, such as methotrexate and pemetrexed (PubMed:18174275). Involved in FOLR1-mediated endocytosis by serving as a route of export of folates from acidified endosomes (By similarity). Also acts as a lower-affinity, pH-independent heme carrier protein and constitutes the main importer of heme in the intestine (By similarity). Imports heme in the retina and retinal pigment epithelium, in neurons of the hippocampus, in hepatocytes and in the renal epithelial cells (By similarity). Hence, participates in the trafficking of heme and increases intracellular iron content (By similarity).</text>
</comment>
<comment type="catalytic activity">
    <reaction evidence="12">
        <text>folate(in) + H(+)(in) = folate(out) + H(+)(out)</text>
        <dbReference type="Rhea" id="RHEA:70159"/>
        <dbReference type="ChEBI" id="CHEBI:15378"/>
        <dbReference type="ChEBI" id="CHEBI:62501"/>
    </reaction>
</comment>
<comment type="catalytic activity">
    <reaction evidence="2">
        <text>(6S)-5-methyl-5,6,7,8-tetrahydrofolate(in) + H(+)(in) = (6S)-5-methyl-5,6,7,8-tetrahydrofolate(out) + H(+)(out)</text>
        <dbReference type="Rhea" id="RHEA:70167"/>
        <dbReference type="ChEBI" id="CHEBI:15378"/>
        <dbReference type="ChEBI" id="CHEBI:18608"/>
    </reaction>
</comment>
<comment type="catalytic activity">
    <reaction evidence="12">
        <text>methotrexate(in) + H(+)(in) = methotrexate(out) + H(+)(out)</text>
        <dbReference type="Rhea" id="RHEA:70163"/>
        <dbReference type="ChEBI" id="CHEBI:15378"/>
        <dbReference type="ChEBI" id="CHEBI:50681"/>
    </reaction>
</comment>
<comment type="catalytic activity">
    <reaction evidence="3">
        <text>pemetrexed(in) + H(+)(in) = pemetrexed(out) + H(+)(out)</text>
        <dbReference type="Rhea" id="RHEA:70171"/>
        <dbReference type="ChEBI" id="CHEBI:15378"/>
        <dbReference type="ChEBI" id="CHEBI:63724"/>
    </reaction>
</comment>
<comment type="activity regulation">
    <text evidence="7">In contrast to human ortholog, not inhibited by myricetin.</text>
</comment>
<comment type="biophysicochemical properties">
    <kinetics>
        <KM evidence="6">2.4 uM for folic acid</KM>
        <KM evidence="6">5.7 uM for methotrexate</KM>
    </kinetics>
    <phDependence>
        <text evidence="6">Optimum pH is 5.5.</text>
    </phDependence>
</comment>
<comment type="subunit">
    <text evidence="3">Monomer.</text>
</comment>
<comment type="subcellular location">
    <subcellularLocation>
        <location evidence="3">Cell membrane</location>
        <topology evidence="4">Multi-pass membrane protein</topology>
    </subcellularLocation>
    <subcellularLocation>
        <location evidence="3">Apical cell membrane</location>
        <topology evidence="4">Multi-pass membrane protein</topology>
    </subcellularLocation>
    <subcellularLocation>
        <location evidence="3">Basolateral cell membrane</location>
        <topology evidence="4">Multi-pass membrane protein</topology>
    </subcellularLocation>
    <subcellularLocation>
        <location evidence="3">Endosome membrane</location>
        <topology evidence="4">Multi-pass membrane protein</topology>
    </subcellularLocation>
    <subcellularLocation>
        <location evidence="2">Cytoplasm</location>
    </subcellularLocation>
    <text evidence="2">Localizes to the apical membrane of intestinal cells in iron-deficient cells, while it resides in the cytoplasm in iron-replete cells (By similarity). Localizes to the basolateral membrane of choroid plexus (By similarity).</text>
</comment>
<comment type="tissue specificity">
    <text evidence="5 6">Expressed almost exclusively in the small intestine: expressed at high level in the upper half of the small intestine (duodenum and jejunum), expression decreases downwardly in the subsequent quarter and is undetectable in the last quarter (the lowest ileum) (PubMed:18174275). Expressed at low level in other tissues, including liver (PubMed:16143108, PubMed:18174275).</text>
</comment>
<comment type="similarity">
    <text evidence="11">Belongs to the major facilitator superfamily. SLC46A family.</text>
</comment>
<feature type="chain" id="PRO_0000084853" description="Proton-coupled folate transporter">
    <location>
        <begin position="1"/>
        <end position="459"/>
    </location>
</feature>
<feature type="topological domain" description="Cytoplasmic" evidence="1">
    <location>
        <begin position="1"/>
        <end position="25"/>
    </location>
</feature>
<feature type="transmembrane region" description="Helical; Name=TM1" evidence="1">
    <location>
        <begin position="26"/>
        <end position="44"/>
    </location>
</feature>
<feature type="topological domain" description="Extracellular" evidence="1">
    <location>
        <begin position="45"/>
        <end position="82"/>
    </location>
</feature>
<feature type="transmembrane region" description="Helical; Name=TM2" evidence="1">
    <location>
        <begin position="83"/>
        <end position="108"/>
    </location>
</feature>
<feature type="topological domain" description="Cytoplasmic" evidence="1">
    <location>
        <begin position="109"/>
        <end position="112"/>
    </location>
</feature>
<feature type="transmembrane region" description="Helical; Name=TM3" evidence="1">
    <location>
        <begin position="113"/>
        <end position="135"/>
    </location>
</feature>
<feature type="topological domain" description="Extracellular" evidence="1">
    <location>
        <begin position="136"/>
        <end position="140"/>
    </location>
</feature>
<feature type="transmembrane region" description="Helical; Name=TM4" evidence="1">
    <location>
        <begin position="141"/>
        <end position="154"/>
    </location>
</feature>
<feature type="topological domain" description="Cytoplasmic" evidence="1">
    <location>
        <begin position="155"/>
        <end position="177"/>
    </location>
</feature>
<feature type="transmembrane region" description="Helical; Name=TM5" evidence="1">
    <location>
        <begin position="178"/>
        <end position="203"/>
    </location>
</feature>
<feature type="topological domain" description="Extracellular" evidence="1">
    <location>
        <begin position="204"/>
        <end position="208"/>
    </location>
</feature>
<feature type="transmembrane region" description="Helical; Name=TM6" evidence="1">
    <location>
        <begin position="209"/>
        <end position="227"/>
    </location>
</feature>
<feature type="topological domain" description="Cytoplasmic" evidence="1">
    <location>
        <begin position="228"/>
        <end position="266"/>
    </location>
</feature>
<feature type="transmembrane region" description="Helical; Name=TM7" evidence="1">
    <location>
        <begin position="267"/>
        <end position="289"/>
    </location>
</feature>
<feature type="topological domain" description="Extracellular" evidence="1">
    <location>
        <begin position="290"/>
        <end position="302"/>
    </location>
</feature>
<feature type="transmembrane region" description="Helical; Name=TM8" evidence="1">
    <location>
        <begin position="303"/>
        <end position="325"/>
    </location>
</feature>
<feature type="topological domain" description="Cytoplasmic" evidence="1">
    <location>
        <begin position="326"/>
        <end position="331"/>
    </location>
</feature>
<feature type="transmembrane region" description="Helical; Name=TM9" evidence="1">
    <location>
        <begin position="332"/>
        <end position="351"/>
    </location>
</feature>
<feature type="topological domain" description="Extracellular" evidence="1">
    <location>
        <begin position="352"/>
        <end position="355"/>
    </location>
</feature>
<feature type="transmembrane region" description="Helical; Name=TM10" evidence="1">
    <location>
        <begin position="356"/>
        <end position="376"/>
    </location>
</feature>
<feature type="topological domain" description="Cytoplasmic" evidence="1">
    <location>
        <begin position="377"/>
        <end position="388"/>
    </location>
</feature>
<feature type="transmembrane region" description="Helical; Name=TM11" evidence="1">
    <location>
        <begin position="389"/>
        <end position="414"/>
    </location>
</feature>
<feature type="topological domain" description="Extracellular" evidence="1">
    <location>
        <begin position="415"/>
        <end position="422"/>
    </location>
</feature>
<feature type="transmembrane region" description="Helical; Name=TM12" evidence="1">
    <location>
        <begin position="423"/>
        <end position="441"/>
    </location>
</feature>
<feature type="topological domain" description="Cytoplasmic" evidence="1">
    <location>
        <begin position="442"/>
        <end position="459"/>
    </location>
</feature>
<feature type="binding site" description="reversibly protonated residue during proton transport" evidence="3">
    <location>
        <position position="156"/>
    </location>
    <ligand>
        <name>H(+)</name>
        <dbReference type="ChEBI" id="CHEBI:15378"/>
    </ligand>
</feature>
<feature type="binding site" description="reversibly protonated residue during proton transport" evidence="3">
    <location>
        <position position="185"/>
    </location>
    <ligand>
        <name>H(+)</name>
        <dbReference type="ChEBI" id="CHEBI:15378"/>
    </ligand>
</feature>
<feature type="binding site" description="reversibly protonated residue during proton transport" evidence="3">
    <location>
        <position position="281"/>
    </location>
    <ligand>
        <name>H(+)</name>
        <dbReference type="ChEBI" id="CHEBI:15378"/>
    </ligand>
</feature>
<feature type="modified residue" description="N-acetylmethionine" evidence="3">
    <location>
        <position position="1"/>
    </location>
</feature>
<feature type="modified residue" description="Phosphoserine" evidence="3">
    <location>
        <position position="6"/>
    </location>
</feature>
<feature type="glycosylation site" description="N-linked (GlcNAc...) asparagine" evidence="4">
    <location>
        <position position="58"/>
    </location>
</feature>
<feature type="glycosylation site" description="N-linked (GlcNAc...) asparagine" evidence="4">
    <location>
        <position position="68"/>
    </location>
</feature>
<feature type="disulfide bond" evidence="1">
    <location>
        <begin position="66"/>
        <end position="298"/>
    </location>
</feature>
<feature type="mutagenesis site" description="Promotes sensitivity to myricetin inhibitor." evidence="7">
    <original>N</original>
    <variation>G</variation>
    <location>
        <position position="158"/>
    </location>
</feature>
<evidence type="ECO:0000250" key="1">
    <source>
        <dbReference type="UniProtKB" id="F1NJ67"/>
    </source>
</evidence>
<evidence type="ECO:0000250" key="2">
    <source>
        <dbReference type="UniProtKB" id="Q6PEM8"/>
    </source>
</evidence>
<evidence type="ECO:0000250" key="3">
    <source>
        <dbReference type="UniProtKB" id="Q96NT5"/>
    </source>
</evidence>
<evidence type="ECO:0000255" key="4"/>
<evidence type="ECO:0000269" key="5">
    <source>
    </source>
</evidence>
<evidence type="ECO:0000269" key="6">
    <source>
    </source>
</evidence>
<evidence type="ECO:0000269" key="7">
    <source>
    </source>
</evidence>
<evidence type="ECO:0000303" key="8">
    <source>
    </source>
</evidence>
<evidence type="ECO:0000303" key="9">
    <source>
    </source>
</evidence>
<evidence type="ECO:0000303" key="10">
    <source>
    </source>
</evidence>
<evidence type="ECO:0000305" key="11"/>
<evidence type="ECO:0000305" key="12">
    <source>
    </source>
</evidence>
<evidence type="ECO:0000312" key="13">
    <source>
        <dbReference type="RGD" id="1309472"/>
    </source>
</evidence>
<protein>
    <recommendedName>
        <fullName evidence="10">Proton-coupled folate transporter</fullName>
        <shortName evidence="10">rPCFT</shortName>
    </recommendedName>
    <alternativeName>
        <fullName evidence="8">Heme carrier protein 1</fullName>
    </alternativeName>
    <alternativeName>
        <fullName evidence="9">PCFT/HCP1</fullName>
    </alternativeName>
    <alternativeName>
        <fullName evidence="11">Solute carrier family 46 member 1</fullName>
    </alternativeName>
</protein>
<proteinExistence type="evidence at protein level"/>